<protein>
    <recommendedName>
        <fullName evidence="1">RNA-binding protein RMD9-like, mitochondrial</fullName>
    </recommendedName>
</protein>
<comment type="function">
    <text evidence="1">May be involved in the processing or stability of mitochondrial mRNAs.</text>
</comment>
<comment type="subunit">
    <text evidence="1">Monomer.</text>
</comment>
<comment type="subcellular location">
    <subcellularLocation>
        <location evidence="1">Mitochondrion inner membrane</location>
        <topology evidence="1">Peripheral membrane protein</topology>
        <orientation evidence="1">Matrix side</orientation>
    </subcellularLocation>
</comment>
<comment type="PTM">
    <text evidence="1">Phosphorylated. Phosphorylation promotes binding to RNA.</text>
</comment>
<comment type="miscellaneous">
    <text evidence="4">Present with 2080 molecules/cell in log phase SD medium.</text>
</comment>
<comment type="similarity">
    <text evidence="5">Belongs to the RMD9 family.</text>
</comment>
<evidence type="ECO:0000250" key="1">
    <source>
        <dbReference type="UniProtKB" id="P53140"/>
    </source>
</evidence>
<evidence type="ECO:0000255" key="2"/>
<evidence type="ECO:0000256" key="3">
    <source>
        <dbReference type="SAM" id="MobiDB-lite"/>
    </source>
</evidence>
<evidence type="ECO:0000269" key="4">
    <source>
    </source>
</evidence>
<evidence type="ECO:0000305" key="5"/>
<evidence type="ECO:0007744" key="6">
    <source>
    </source>
</evidence>
<gene>
    <name type="ordered locus">YBR238C</name>
    <name type="ORF">YBR1608</name>
</gene>
<feature type="transit peptide" description="Mitochondrion" evidence="2">
    <location>
        <begin position="1"/>
        <end status="unknown"/>
    </location>
</feature>
<feature type="chain" id="PRO_0000202521" description="RNA-binding protein RMD9-like, mitochondrial">
    <location>
        <begin status="unknown"/>
        <end position="731"/>
    </location>
</feature>
<feature type="region of interest" description="Disordered" evidence="3">
    <location>
        <begin position="1"/>
        <end position="29"/>
    </location>
</feature>
<feature type="region of interest" description="Disordered" evidence="3">
    <location>
        <begin position="77"/>
        <end position="133"/>
    </location>
</feature>
<feature type="region of interest" description="Disordered" evidence="3">
    <location>
        <begin position="590"/>
        <end position="630"/>
    </location>
</feature>
<feature type="compositionally biased region" description="Polar residues" evidence="3">
    <location>
        <begin position="1"/>
        <end position="10"/>
    </location>
</feature>
<feature type="compositionally biased region" description="Low complexity" evidence="3">
    <location>
        <begin position="83"/>
        <end position="100"/>
    </location>
</feature>
<feature type="compositionally biased region" description="Basic residues" evidence="3">
    <location>
        <begin position="101"/>
        <end position="122"/>
    </location>
</feature>
<feature type="compositionally biased region" description="Polar residues" evidence="3">
    <location>
        <begin position="598"/>
        <end position="617"/>
    </location>
</feature>
<feature type="modified residue" description="Phosphoserine" evidence="6">
    <location>
        <position position="132"/>
    </location>
</feature>
<organism>
    <name type="scientific">Saccharomyces cerevisiae (strain ATCC 204508 / S288c)</name>
    <name type="common">Baker's yeast</name>
    <dbReference type="NCBI Taxonomy" id="559292"/>
    <lineage>
        <taxon>Eukaryota</taxon>
        <taxon>Fungi</taxon>
        <taxon>Dikarya</taxon>
        <taxon>Ascomycota</taxon>
        <taxon>Saccharomycotina</taxon>
        <taxon>Saccharomycetes</taxon>
        <taxon>Saccharomycetales</taxon>
        <taxon>Saccharomycetaceae</taxon>
        <taxon>Saccharomyces</taxon>
    </lineage>
</organism>
<accession>P38330</accession>
<accession>D6VQN4</accession>
<keyword id="KW-0472">Membrane</keyword>
<keyword id="KW-0496">Mitochondrion</keyword>
<keyword id="KW-0999">Mitochondrion inner membrane</keyword>
<keyword id="KW-0597">Phosphoprotein</keyword>
<keyword id="KW-1185">Reference proteome</keyword>
<keyword id="KW-0809">Transit peptide</keyword>
<proteinExistence type="evidence at protein level"/>
<dbReference type="EMBL" id="Z36107">
    <property type="protein sequence ID" value="CAA85201.1"/>
    <property type="molecule type" value="Genomic_DNA"/>
</dbReference>
<dbReference type="EMBL" id="BK006936">
    <property type="protein sequence ID" value="DAA07354.1"/>
    <property type="molecule type" value="Genomic_DNA"/>
</dbReference>
<dbReference type="PIR" id="S46115">
    <property type="entry name" value="S46115"/>
</dbReference>
<dbReference type="RefSeq" id="NP_009797.1">
    <property type="nucleotide sequence ID" value="NM_001178586.1"/>
</dbReference>
<dbReference type="SMR" id="P38330"/>
<dbReference type="BioGRID" id="32933">
    <property type="interactions" value="411"/>
</dbReference>
<dbReference type="DIP" id="DIP-4848N"/>
<dbReference type="FunCoup" id="P38330">
    <property type="interactions" value="84"/>
</dbReference>
<dbReference type="IntAct" id="P38330">
    <property type="interactions" value="20"/>
</dbReference>
<dbReference type="STRING" id="4932.YBR238C"/>
<dbReference type="GlyGen" id="P38330">
    <property type="glycosylation" value="1 site"/>
</dbReference>
<dbReference type="iPTMnet" id="P38330"/>
<dbReference type="PaxDb" id="4932-YBR238C"/>
<dbReference type="PeptideAtlas" id="P38330"/>
<dbReference type="EnsemblFungi" id="YBR238C_mRNA">
    <property type="protein sequence ID" value="YBR238C"/>
    <property type="gene ID" value="YBR238C"/>
</dbReference>
<dbReference type="GeneID" id="852540"/>
<dbReference type="KEGG" id="sce:YBR238C"/>
<dbReference type="AGR" id="SGD:S000000442"/>
<dbReference type="SGD" id="S000000442">
    <property type="gene designation" value="YBR238C"/>
</dbReference>
<dbReference type="VEuPathDB" id="FungiDB:YBR238C"/>
<dbReference type="eggNOG" id="ENOG502QUSW">
    <property type="taxonomic scope" value="Eukaryota"/>
</dbReference>
<dbReference type="GeneTree" id="ENSGT00940000176413"/>
<dbReference type="HOGENOM" id="CLU_019840_0_0_1"/>
<dbReference type="InParanoid" id="P38330"/>
<dbReference type="OMA" id="EMKYGYL"/>
<dbReference type="OrthoDB" id="4081443at2759"/>
<dbReference type="BioCyc" id="YEAST:G3O-29169-MONOMER"/>
<dbReference type="BioGRID-ORCS" id="852540">
    <property type="hits" value="0 hits in 10 CRISPR screens"/>
</dbReference>
<dbReference type="CD-CODE" id="A777E0F8">
    <property type="entry name" value="P-body"/>
</dbReference>
<dbReference type="PRO" id="PR:P38330"/>
<dbReference type="Proteomes" id="UP000002311">
    <property type="component" value="Chromosome II"/>
</dbReference>
<dbReference type="RNAct" id="P38330">
    <property type="molecule type" value="protein"/>
</dbReference>
<dbReference type="GO" id="GO:0005737">
    <property type="term" value="C:cytoplasm"/>
    <property type="evidence" value="ECO:0007005"/>
    <property type="project" value="SGD"/>
</dbReference>
<dbReference type="GO" id="GO:0005743">
    <property type="term" value="C:mitochondrial inner membrane"/>
    <property type="evidence" value="ECO:0007669"/>
    <property type="project" value="UniProtKB-SubCell"/>
</dbReference>
<dbReference type="GO" id="GO:0031966">
    <property type="term" value="C:mitochondrial membrane"/>
    <property type="evidence" value="ECO:0000314"/>
    <property type="project" value="SGD"/>
</dbReference>
<dbReference type="GO" id="GO:0005739">
    <property type="term" value="C:mitochondrion"/>
    <property type="evidence" value="ECO:0007005"/>
    <property type="project" value="SGD"/>
</dbReference>
<dbReference type="GO" id="GO:0000932">
    <property type="term" value="C:P-body"/>
    <property type="evidence" value="ECO:0000314"/>
    <property type="project" value="SGD"/>
</dbReference>
<dbReference type="GO" id="GO:0003729">
    <property type="term" value="F:mRNA binding"/>
    <property type="evidence" value="ECO:0007005"/>
    <property type="project" value="SGD"/>
</dbReference>
<dbReference type="GO" id="GO:0009060">
    <property type="term" value="P:aerobic respiration"/>
    <property type="evidence" value="ECO:0000316"/>
    <property type="project" value="SGD"/>
</dbReference>
<dbReference type="PANTHER" id="PTHR42264">
    <property type="entry name" value="EPHRIN_REC_LIKE DOMAIN-CONTAINING PROTEIN"/>
    <property type="match status" value="1"/>
</dbReference>
<name>RMD9L_YEAST</name>
<sequence>MIRLAQQTQVLKGKPPNQFVPHPTKNSLTHPMKFNGTIAMEHHEHNYAIPYTPATFNNPALATYQVSPANHFVPHFGGNIGANNNNHLAQNNSNNSNNHHNNNRNHHHNNNRNHHQNNHNHSKYNNSNQGNSISPDSPWFHKVCAFEDCVSQTLYMSQTPRRQNMKHHSEHPNSNANPLFWDSIGRAMGLYHDLLTTPELNSDRVSKLVHLLHNGLRANRNQLTRMNKKPDYDSQSFHKEMTNYLCKSLREISEDVLNGKVELNEYGAMHLITAFKELLLFEEAVDIWKAAINGQNTYTSNIFLNPRVVGVILPILYDNGVSYPEIQALYEKSSSMINYFHPNLSVGMIRASLSASENDMALKLFQKLCQESTEMKYGYLIETHLSFIGECKDLNVAQTFFDKALNDEMPYKIDLQVSYVKSFLRNIWSQTRDFNHIYQIWYKSSLHYGRNVNHGISSSLNDTFFDIFFENYAVDKMQGFQTLQNIIQTYNNIKHIDEPFFNIILAKCTVWHDRSILEYIDKSYEAYHIPKTIVAYRILLKSMGSVDDASNAEILQRWMDLIRKSDEIGQRFIANADWAALRDATVTWTQNDRDSKKSNMNSTQISRTATPSPSLTPMDTPAPEHLFNNPQNPMDFYSHPALQAATASGAFDEFAAEAASSSIPVDGRMVLYLKIVKRYSPYCRDSRQLARLTTGTAVKYSVLQEVLNQFQTLIVNDIPIPELHNLKPTCV</sequence>
<reference key="1">
    <citation type="journal article" date="1994" name="EMBO J.">
        <title>Complete DNA sequence of yeast chromosome II.</title>
        <authorList>
            <person name="Feldmann H."/>
            <person name="Aigle M."/>
            <person name="Aljinovic G."/>
            <person name="Andre B."/>
            <person name="Baclet M.C."/>
            <person name="Barthe C."/>
            <person name="Baur A."/>
            <person name="Becam A.-M."/>
            <person name="Biteau N."/>
            <person name="Boles E."/>
            <person name="Brandt T."/>
            <person name="Brendel M."/>
            <person name="Brueckner M."/>
            <person name="Bussereau F."/>
            <person name="Christiansen C."/>
            <person name="Contreras R."/>
            <person name="Crouzet M."/>
            <person name="Cziepluch C."/>
            <person name="Demolis N."/>
            <person name="Delaveau T."/>
            <person name="Doignon F."/>
            <person name="Domdey H."/>
            <person name="Duesterhus S."/>
            <person name="Dubois E."/>
            <person name="Dujon B."/>
            <person name="El Bakkoury M."/>
            <person name="Entian K.-D."/>
            <person name="Feuermann M."/>
            <person name="Fiers W."/>
            <person name="Fobo G.M."/>
            <person name="Fritz C."/>
            <person name="Gassenhuber J."/>
            <person name="Glansdorff N."/>
            <person name="Goffeau A."/>
            <person name="Grivell L.A."/>
            <person name="de Haan M."/>
            <person name="Hein C."/>
            <person name="Herbert C.J."/>
            <person name="Hollenberg C.P."/>
            <person name="Holmstroem K."/>
            <person name="Jacq C."/>
            <person name="Jacquet M."/>
            <person name="Jauniaux J.-C."/>
            <person name="Jonniaux J.-L."/>
            <person name="Kallesoee T."/>
            <person name="Kiesau P."/>
            <person name="Kirchrath L."/>
            <person name="Koetter P."/>
            <person name="Korol S."/>
            <person name="Liebl S."/>
            <person name="Logghe M."/>
            <person name="Lohan A.J.E."/>
            <person name="Louis E.J."/>
            <person name="Li Z.Y."/>
            <person name="Maat M.J."/>
            <person name="Mallet L."/>
            <person name="Mannhaupt G."/>
            <person name="Messenguy F."/>
            <person name="Miosga T."/>
            <person name="Molemans F."/>
            <person name="Mueller S."/>
            <person name="Nasr F."/>
            <person name="Obermaier B."/>
            <person name="Perea J."/>
            <person name="Pierard A."/>
            <person name="Piravandi E."/>
            <person name="Pohl F.M."/>
            <person name="Pohl T.M."/>
            <person name="Potier S."/>
            <person name="Proft M."/>
            <person name="Purnelle B."/>
            <person name="Ramezani Rad M."/>
            <person name="Rieger M."/>
            <person name="Rose M."/>
            <person name="Schaaff-Gerstenschlaeger I."/>
            <person name="Scherens B."/>
            <person name="Schwarzlose C."/>
            <person name="Skala J."/>
            <person name="Slonimski P.P."/>
            <person name="Smits P.H.M."/>
            <person name="Souciet J.-L."/>
            <person name="Steensma H.Y."/>
            <person name="Stucka R."/>
            <person name="Urrestarazu L.A."/>
            <person name="van der Aart Q.J.M."/>
            <person name="Van Dyck L."/>
            <person name="Vassarotti A."/>
            <person name="Vetter I."/>
            <person name="Vierendeels F."/>
            <person name="Vissers S."/>
            <person name="Wagner G."/>
            <person name="de Wergifosse P."/>
            <person name="Wolfe K.H."/>
            <person name="Zagulski M."/>
            <person name="Zimmermann F.K."/>
            <person name="Mewes H.-W."/>
            <person name="Kleine K."/>
        </authorList>
    </citation>
    <scope>NUCLEOTIDE SEQUENCE [LARGE SCALE GENOMIC DNA]</scope>
    <source>
        <strain>ATCC 204508 / S288c</strain>
    </source>
</reference>
<reference key="2">
    <citation type="journal article" date="2014" name="G3 (Bethesda)">
        <title>The reference genome sequence of Saccharomyces cerevisiae: Then and now.</title>
        <authorList>
            <person name="Engel S.R."/>
            <person name="Dietrich F.S."/>
            <person name="Fisk D.G."/>
            <person name="Binkley G."/>
            <person name="Balakrishnan R."/>
            <person name="Costanzo M.C."/>
            <person name="Dwight S.S."/>
            <person name="Hitz B.C."/>
            <person name="Karra K."/>
            <person name="Nash R.S."/>
            <person name="Weng S."/>
            <person name="Wong E.D."/>
            <person name="Lloyd P."/>
            <person name="Skrzypek M.S."/>
            <person name="Miyasato S.R."/>
            <person name="Simison M."/>
            <person name="Cherry J.M."/>
        </authorList>
    </citation>
    <scope>GENOME REANNOTATION</scope>
    <source>
        <strain>ATCC 204508 / S288c</strain>
    </source>
</reference>
<reference key="3">
    <citation type="journal article" date="2003" name="Nature">
        <title>Global analysis of protein expression in yeast.</title>
        <authorList>
            <person name="Ghaemmaghami S."/>
            <person name="Huh W.-K."/>
            <person name="Bower K."/>
            <person name="Howson R.W."/>
            <person name="Belle A."/>
            <person name="Dephoure N."/>
            <person name="O'Shea E.K."/>
            <person name="Weissman J.S."/>
        </authorList>
    </citation>
    <scope>LEVEL OF PROTEIN EXPRESSION [LARGE SCALE ANALYSIS]</scope>
</reference>
<reference key="4">
    <citation type="journal article" date="2009" name="Science">
        <title>Global analysis of Cdk1 substrate phosphorylation sites provides insights into evolution.</title>
        <authorList>
            <person name="Holt L.J."/>
            <person name="Tuch B.B."/>
            <person name="Villen J."/>
            <person name="Johnson A.D."/>
            <person name="Gygi S.P."/>
            <person name="Morgan D.O."/>
        </authorList>
    </citation>
    <scope>PHOSPHORYLATION [LARGE SCALE ANALYSIS] AT SER-132</scope>
    <scope>IDENTIFICATION BY MASS SPECTROMETRY [LARGE SCALE ANALYSIS]</scope>
</reference>